<sequence>MTGAVTIIGGGLAGCEAAWQIAGRGVRVVLREMKPQRYSPAHHLSGLAELVCSNSLRGESLENAVGLLKEELRRAGSLIMAAADATRVPAGGALAVDRELFSSYVTERIEGHPLIELVREEVTELPAEGVLVIASGPLTSDALAERLKQITGDSLYFYDAIAPIVAADSLDSDKVFRASRYGKGDGDDYLNCPLSEEEYERFVDAVLAAEKVPARDFEKVVHFEGCMPVEEMAERGRETLRFGPLKPVGLTDPRTGREPHAVVQLRAENREGTLFNLVGFQTKLTWPEQRRVFRMIPGLESAEFVRLGSMHRNTFINAPTLLEPTFRLKGDPRTFFAGQITGVEGYVESAGSGFLAGINSARLVRGEDPAVPPPVTALGALVAHITTAPARHFQPMNVNYGLFPPLEGKVKKKDRRGRLAERALAELDHWLATV</sequence>
<organism>
    <name type="scientific">Geobacter sulfurreducens (strain ATCC 51573 / DSM 12127 / PCA)</name>
    <dbReference type="NCBI Taxonomy" id="243231"/>
    <lineage>
        <taxon>Bacteria</taxon>
        <taxon>Pseudomonadati</taxon>
        <taxon>Thermodesulfobacteriota</taxon>
        <taxon>Desulfuromonadia</taxon>
        <taxon>Geobacterales</taxon>
        <taxon>Geobacteraceae</taxon>
        <taxon>Geobacter</taxon>
    </lineage>
</organism>
<dbReference type="EC" id="2.1.1.74" evidence="1"/>
<dbReference type="EMBL" id="AE017180">
    <property type="protein sequence ID" value="AAR35920.1"/>
    <property type="molecule type" value="Genomic_DNA"/>
</dbReference>
<dbReference type="RefSeq" id="NP_953593.1">
    <property type="nucleotide sequence ID" value="NC_002939.5"/>
</dbReference>
<dbReference type="RefSeq" id="WP_010943183.1">
    <property type="nucleotide sequence ID" value="NC_002939.5"/>
</dbReference>
<dbReference type="SMR" id="Q74A44"/>
<dbReference type="STRING" id="243231.GSU2547"/>
<dbReference type="EnsemblBacteria" id="AAR35920">
    <property type="protein sequence ID" value="AAR35920"/>
    <property type="gene ID" value="GSU2547"/>
</dbReference>
<dbReference type="KEGG" id="gsu:GSU2547"/>
<dbReference type="PATRIC" id="fig|243231.5.peg.2577"/>
<dbReference type="eggNOG" id="COG1206">
    <property type="taxonomic scope" value="Bacteria"/>
</dbReference>
<dbReference type="HOGENOM" id="CLU_033057_1_0_7"/>
<dbReference type="InParanoid" id="Q74A44"/>
<dbReference type="OrthoDB" id="9803114at2"/>
<dbReference type="Proteomes" id="UP000000577">
    <property type="component" value="Chromosome"/>
</dbReference>
<dbReference type="GO" id="GO:0005829">
    <property type="term" value="C:cytosol"/>
    <property type="evidence" value="ECO:0000318"/>
    <property type="project" value="GO_Central"/>
</dbReference>
<dbReference type="GO" id="GO:0050660">
    <property type="term" value="F:flavin adenine dinucleotide binding"/>
    <property type="evidence" value="ECO:0000318"/>
    <property type="project" value="GO_Central"/>
</dbReference>
<dbReference type="GO" id="GO:0047151">
    <property type="term" value="F:tRNA (uracil(54)-C5)-methyltransferase activity, 5,10-methylenetetrahydrofolate-dependent"/>
    <property type="evidence" value="ECO:0007669"/>
    <property type="project" value="UniProtKB-UniRule"/>
</dbReference>
<dbReference type="GO" id="GO:0030488">
    <property type="term" value="P:tRNA methylation"/>
    <property type="evidence" value="ECO:0000318"/>
    <property type="project" value="GO_Central"/>
</dbReference>
<dbReference type="GO" id="GO:0002098">
    <property type="term" value="P:tRNA wobble uridine modification"/>
    <property type="evidence" value="ECO:0000318"/>
    <property type="project" value="GO_Central"/>
</dbReference>
<dbReference type="FunFam" id="3.50.50.60:FF:000035">
    <property type="entry name" value="Methylenetetrahydrofolate--tRNA-(uracil-5-)-methyltransferase TrmFO"/>
    <property type="match status" value="1"/>
</dbReference>
<dbReference type="Gene3D" id="3.50.50.60">
    <property type="entry name" value="FAD/NAD(P)-binding domain"/>
    <property type="match status" value="2"/>
</dbReference>
<dbReference type="HAMAP" id="MF_01037">
    <property type="entry name" value="TrmFO"/>
    <property type="match status" value="1"/>
</dbReference>
<dbReference type="InterPro" id="IPR036188">
    <property type="entry name" value="FAD/NAD-bd_sf"/>
</dbReference>
<dbReference type="InterPro" id="IPR002218">
    <property type="entry name" value="MnmG-rel"/>
</dbReference>
<dbReference type="InterPro" id="IPR020595">
    <property type="entry name" value="MnmG-rel_CS"/>
</dbReference>
<dbReference type="InterPro" id="IPR040131">
    <property type="entry name" value="MnmG_N"/>
</dbReference>
<dbReference type="InterPro" id="IPR004417">
    <property type="entry name" value="TrmFO"/>
</dbReference>
<dbReference type="NCBIfam" id="TIGR00137">
    <property type="entry name" value="gid_trmFO"/>
    <property type="match status" value="1"/>
</dbReference>
<dbReference type="NCBIfam" id="NF003739">
    <property type="entry name" value="PRK05335.1"/>
    <property type="match status" value="1"/>
</dbReference>
<dbReference type="PANTHER" id="PTHR11806">
    <property type="entry name" value="GLUCOSE INHIBITED DIVISION PROTEIN A"/>
    <property type="match status" value="1"/>
</dbReference>
<dbReference type="PANTHER" id="PTHR11806:SF2">
    <property type="entry name" value="METHYLENETETRAHYDROFOLATE--TRNA-(URACIL-5-)-METHYLTRANSFERASE TRMFO"/>
    <property type="match status" value="1"/>
</dbReference>
<dbReference type="Pfam" id="PF01134">
    <property type="entry name" value="GIDA"/>
    <property type="match status" value="1"/>
</dbReference>
<dbReference type="SUPFAM" id="SSF51905">
    <property type="entry name" value="FAD/NAD(P)-binding domain"/>
    <property type="match status" value="1"/>
</dbReference>
<dbReference type="PROSITE" id="PS01281">
    <property type="entry name" value="GIDA_2"/>
    <property type="match status" value="1"/>
</dbReference>
<feature type="chain" id="PRO_0000117245" description="Methylenetetrahydrofolate--tRNA-(uracil-5-)-methyltransferase TrmFO">
    <location>
        <begin position="1"/>
        <end position="434"/>
    </location>
</feature>
<feature type="binding site" evidence="1">
    <location>
        <begin position="9"/>
        <end position="14"/>
    </location>
    <ligand>
        <name>FAD</name>
        <dbReference type="ChEBI" id="CHEBI:57692"/>
    </ligand>
</feature>
<reference key="1">
    <citation type="journal article" date="2003" name="Science">
        <title>Genome of Geobacter sulfurreducens: metal reduction in subsurface environments.</title>
        <authorList>
            <person name="Methe B.A."/>
            <person name="Nelson K.E."/>
            <person name="Eisen J.A."/>
            <person name="Paulsen I.T."/>
            <person name="Nelson W.C."/>
            <person name="Heidelberg J.F."/>
            <person name="Wu D."/>
            <person name="Wu M."/>
            <person name="Ward N.L."/>
            <person name="Beanan M.J."/>
            <person name="Dodson R.J."/>
            <person name="Madupu R."/>
            <person name="Brinkac L.M."/>
            <person name="Daugherty S.C."/>
            <person name="DeBoy R.T."/>
            <person name="Durkin A.S."/>
            <person name="Gwinn M.L."/>
            <person name="Kolonay J.F."/>
            <person name="Sullivan S.A."/>
            <person name="Haft D.H."/>
            <person name="Selengut J."/>
            <person name="Davidsen T.M."/>
            <person name="Zafar N."/>
            <person name="White O."/>
            <person name="Tran B."/>
            <person name="Romero C."/>
            <person name="Forberger H.A."/>
            <person name="Weidman J.F."/>
            <person name="Khouri H.M."/>
            <person name="Feldblyum T.V."/>
            <person name="Utterback T.R."/>
            <person name="Van Aken S.E."/>
            <person name="Lovley D.R."/>
            <person name="Fraser C.M."/>
        </authorList>
    </citation>
    <scope>NUCLEOTIDE SEQUENCE [LARGE SCALE GENOMIC DNA]</scope>
    <source>
        <strain>ATCC 51573 / DSM 12127 / PCA</strain>
    </source>
</reference>
<protein>
    <recommendedName>
        <fullName evidence="1">Methylenetetrahydrofolate--tRNA-(uracil-5-)-methyltransferase TrmFO</fullName>
        <ecNumber evidence="1">2.1.1.74</ecNumber>
    </recommendedName>
    <alternativeName>
        <fullName evidence="1">Folate-dependent tRNA (uracil-5-)-methyltransferase</fullName>
    </alternativeName>
    <alternativeName>
        <fullName evidence="1">Folate-dependent tRNA(M-5-U54)-methyltransferase</fullName>
    </alternativeName>
</protein>
<accession>Q74A44</accession>
<keyword id="KW-0963">Cytoplasm</keyword>
<keyword id="KW-0274">FAD</keyword>
<keyword id="KW-0285">Flavoprotein</keyword>
<keyword id="KW-0489">Methyltransferase</keyword>
<keyword id="KW-0520">NAD</keyword>
<keyword id="KW-0521">NADP</keyword>
<keyword id="KW-1185">Reference proteome</keyword>
<keyword id="KW-0808">Transferase</keyword>
<keyword id="KW-0819">tRNA processing</keyword>
<gene>
    <name evidence="1" type="primary">trmFO</name>
    <name type="synonym">gid</name>
    <name type="ordered locus">GSU2547</name>
</gene>
<comment type="function">
    <text evidence="1">Catalyzes the folate-dependent formation of 5-methyl-uridine at position 54 (M-5-U54) in all tRNAs.</text>
</comment>
<comment type="catalytic activity">
    <reaction evidence="1">
        <text>uridine(54) in tRNA + (6R)-5,10-methylene-5,6,7,8-tetrahydrofolate + NADH + H(+) = 5-methyluridine(54) in tRNA + (6S)-5,6,7,8-tetrahydrofolate + NAD(+)</text>
        <dbReference type="Rhea" id="RHEA:16873"/>
        <dbReference type="Rhea" id="RHEA-COMP:10167"/>
        <dbReference type="Rhea" id="RHEA-COMP:10193"/>
        <dbReference type="ChEBI" id="CHEBI:15378"/>
        <dbReference type="ChEBI" id="CHEBI:15636"/>
        <dbReference type="ChEBI" id="CHEBI:57453"/>
        <dbReference type="ChEBI" id="CHEBI:57540"/>
        <dbReference type="ChEBI" id="CHEBI:57945"/>
        <dbReference type="ChEBI" id="CHEBI:65315"/>
        <dbReference type="ChEBI" id="CHEBI:74447"/>
        <dbReference type="EC" id="2.1.1.74"/>
    </reaction>
</comment>
<comment type="catalytic activity">
    <reaction evidence="1">
        <text>uridine(54) in tRNA + (6R)-5,10-methylene-5,6,7,8-tetrahydrofolate + NADPH + H(+) = 5-methyluridine(54) in tRNA + (6S)-5,6,7,8-tetrahydrofolate + NADP(+)</text>
        <dbReference type="Rhea" id="RHEA:62372"/>
        <dbReference type="Rhea" id="RHEA-COMP:10167"/>
        <dbReference type="Rhea" id="RHEA-COMP:10193"/>
        <dbReference type="ChEBI" id="CHEBI:15378"/>
        <dbReference type="ChEBI" id="CHEBI:15636"/>
        <dbReference type="ChEBI" id="CHEBI:57453"/>
        <dbReference type="ChEBI" id="CHEBI:57783"/>
        <dbReference type="ChEBI" id="CHEBI:58349"/>
        <dbReference type="ChEBI" id="CHEBI:65315"/>
        <dbReference type="ChEBI" id="CHEBI:74447"/>
        <dbReference type="EC" id="2.1.1.74"/>
    </reaction>
</comment>
<comment type="cofactor">
    <cofactor evidence="1">
        <name>FAD</name>
        <dbReference type="ChEBI" id="CHEBI:57692"/>
    </cofactor>
</comment>
<comment type="subcellular location">
    <subcellularLocation>
        <location evidence="1">Cytoplasm</location>
    </subcellularLocation>
</comment>
<comment type="similarity">
    <text evidence="1">Belongs to the MnmG family. TrmFO subfamily.</text>
</comment>
<name>TRMFO_GEOSL</name>
<evidence type="ECO:0000255" key="1">
    <source>
        <dbReference type="HAMAP-Rule" id="MF_01037"/>
    </source>
</evidence>
<proteinExistence type="inferred from homology"/>